<proteinExistence type="inferred from homology"/>
<dbReference type="EC" id="4.2.1.109" evidence="1"/>
<dbReference type="EMBL" id="CH476615">
    <property type="protein sequence ID" value="EEP75771.1"/>
    <property type="molecule type" value="Genomic_DNA"/>
</dbReference>
<dbReference type="RefSeq" id="XP_002541104.1">
    <property type="nucleotide sequence ID" value="XM_002541058.1"/>
</dbReference>
<dbReference type="SMR" id="C4JKS2"/>
<dbReference type="FunCoup" id="C4JKS2">
    <property type="interactions" value="223"/>
</dbReference>
<dbReference type="STRING" id="336963.C4JKS2"/>
<dbReference type="GeneID" id="8438639"/>
<dbReference type="KEGG" id="ure:UREG_00618"/>
<dbReference type="VEuPathDB" id="FungiDB:UREG_00618"/>
<dbReference type="eggNOG" id="KOG2631">
    <property type="taxonomic scope" value="Eukaryota"/>
</dbReference>
<dbReference type="HOGENOM" id="CLU_006033_4_0_1"/>
<dbReference type="InParanoid" id="C4JKS2"/>
<dbReference type="OMA" id="WFPGTSG"/>
<dbReference type="OrthoDB" id="191080at2759"/>
<dbReference type="UniPathway" id="UPA00904">
    <property type="reaction ID" value="UER00875"/>
</dbReference>
<dbReference type="Proteomes" id="UP000002058">
    <property type="component" value="Unassembled WGS sequence"/>
</dbReference>
<dbReference type="GO" id="GO:0005737">
    <property type="term" value="C:cytoplasm"/>
    <property type="evidence" value="ECO:0007669"/>
    <property type="project" value="UniProtKB-SubCell"/>
</dbReference>
<dbReference type="GO" id="GO:0046570">
    <property type="term" value="F:methylthioribulose 1-phosphate dehydratase activity"/>
    <property type="evidence" value="ECO:0007669"/>
    <property type="project" value="UniProtKB-UniRule"/>
</dbReference>
<dbReference type="GO" id="GO:0008270">
    <property type="term" value="F:zinc ion binding"/>
    <property type="evidence" value="ECO:0007669"/>
    <property type="project" value="UniProtKB-UniRule"/>
</dbReference>
<dbReference type="GO" id="GO:0019509">
    <property type="term" value="P:L-methionine salvage from methylthioadenosine"/>
    <property type="evidence" value="ECO:0007669"/>
    <property type="project" value="UniProtKB-UniRule"/>
</dbReference>
<dbReference type="FunFam" id="3.40.225.10:FF:000003">
    <property type="entry name" value="Methylthioribulose-1-phosphate dehydratase"/>
    <property type="match status" value="1"/>
</dbReference>
<dbReference type="Gene3D" id="3.40.225.10">
    <property type="entry name" value="Class II aldolase/adducin N-terminal domain"/>
    <property type="match status" value="1"/>
</dbReference>
<dbReference type="HAMAP" id="MF_03116">
    <property type="entry name" value="Salvage_MtnB_euk"/>
    <property type="match status" value="1"/>
</dbReference>
<dbReference type="InterPro" id="IPR001303">
    <property type="entry name" value="Aldolase_II/adducin_N"/>
</dbReference>
<dbReference type="InterPro" id="IPR036409">
    <property type="entry name" value="Aldolase_II/adducin_N_sf"/>
</dbReference>
<dbReference type="InterPro" id="IPR017714">
    <property type="entry name" value="MethylthioRu-1-P_deHdtase_MtnB"/>
</dbReference>
<dbReference type="InterPro" id="IPR027514">
    <property type="entry name" value="Salvage_MtnB_euk"/>
</dbReference>
<dbReference type="NCBIfam" id="TIGR03328">
    <property type="entry name" value="salvage_mtnB"/>
    <property type="match status" value="1"/>
</dbReference>
<dbReference type="PANTHER" id="PTHR10640">
    <property type="entry name" value="METHYLTHIORIBULOSE-1-PHOSPHATE DEHYDRATASE"/>
    <property type="match status" value="1"/>
</dbReference>
<dbReference type="PANTHER" id="PTHR10640:SF7">
    <property type="entry name" value="METHYLTHIORIBULOSE-1-PHOSPHATE DEHYDRATASE"/>
    <property type="match status" value="1"/>
</dbReference>
<dbReference type="Pfam" id="PF00596">
    <property type="entry name" value="Aldolase_II"/>
    <property type="match status" value="1"/>
</dbReference>
<dbReference type="SMART" id="SM01007">
    <property type="entry name" value="Aldolase_II"/>
    <property type="match status" value="1"/>
</dbReference>
<dbReference type="SUPFAM" id="SSF53639">
    <property type="entry name" value="AraD/HMP-PK domain-like"/>
    <property type="match status" value="1"/>
</dbReference>
<protein>
    <recommendedName>
        <fullName evidence="1">Methylthioribulose-1-phosphate dehydratase</fullName>
        <shortName evidence="1">MTRu-1-P dehydratase</shortName>
        <ecNumber evidence="1">4.2.1.109</ecNumber>
    </recommendedName>
</protein>
<keyword id="KW-0028">Amino-acid biosynthesis</keyword>
<keyword id="KW-0963">Cytoplasm</keyword>
<keyword id="KW-0456">Lyase</keyword>
<keyword id="KW-0479">Metal-binding</keyword>
<keyword id="KW-0486">Methionine biosynthesis</keyword>
<keyword id="KW-1185">Reference proteome</keyword>
<keyword id="KW-0862">Zinc</keyword>
<feature type="chain" id="PRO_0000393854" description="Methylthioribulose-1-phosphate dehydratase">
    <location>
        <begin position="1"/>
        <end position="242"/>
    </location>
</feature>
<feature type="region of interest" description="Disordered" evidence="2">
    <location>
        <begin position="1"/>
        <end position="23"/>
    </location>
</feature>
<feature type="active site" description="Proton donor/acceptor" evidence="1">
    <location>
        <position position="148"/>
    </location>
</feature>
<feature type="binding site" evidence="1">
    <location>
        <position position="102"/>
    </location>
    <ligand>
        <name>substrate</name>
    </ligand>
</feature>
<feature type="binding site" evidence="1">
    <location>
        <position position="119"/>
    </location>
    <ligand>
        <name>Zn(2+)</name>
        <dbReference type="ChEBI" id="CHEBI:29105"/>
    </ligand>
</feature>
<feature type="binding site" evidence="1">
    <location>
        <position position="121"/>
    </location>
    <ligand>
        <name>Zn(2+)</name>
        <dbReference type="ChEBI" id="CHEBI:29105"/>
    </ligand>
</feature>
<feature type="binding site" evidence="1">
    <location>
        <position position="204"/>
    </location>
    <ligand>
        <name>Zn(2+)</name>
        <dbReference type="ChEBI" id="CHEBI:29105"/>
    </ligand>
</feature>
<name>MTNB_UNCRE</name>
<gene>
    <name evidence="1" type="primary">MDE1</name>
    <name type="ORF">UREG_00618</name>
</gene>
<comment type="function">
    <text evidence="1">Catalyzes the dehydration of methylthioribulose-1-phosphate (MTRu-1-P) into 2,3-diketo-5-methylthiopentyl-1-phosphate (DK-MTP-1-P).</text>
</comment>
<comment type="catalytic activity">
    <reaction evidence="1">
        <text>5-(methylsulfanyl)-D-ribulose 1-phosphate = 5-methylsulfanyl-2,3-dioxopentyl phosphate + H2O</text>
        <dbReference type="Rhea" id="RHEA:15549"/>
        <dbReference type="ChEBI" id="CHEBI:15377"/>
        <dbReference type="ChEBI" id="CHEBI:58548"/>
        <dbReference type="ChEBI" id="CHEBI:58828"/>
        <dbReference type="EC" id="4.2.1.109"/>
    </reaction>
</comment>
<comment type="cofactor">
    <cofactor evidence="1">
        <name>Zn(2+)</name>
        <dbReference type="ChEBI" id="CHEBI:29105"/>
    </cofactor>
    <text evidence="1">Binds 1 zinc ion per subunit.</text>
</comment>
<comment type="pathway">
    <text evidence="1">Amino-acid biosynthesis; L-methionine biosynthesis via salvage pathway; L-methionine from S-methyl-5-thio-alpha-D-ribose 1-phosphate: step 2/6.</text>
</comment>
<comment type="subcellular location">
    <subcellularLocation>
        <location evidence="1">Cytoplasm</location>
    </subcellularLocation>
</comment>
<comment type="similarity">
    <text evidence="1">Belongs to the aldolase class II family. MtnB subfamily.</text>
</comment>
<reference key="1">
    <citation type="journal article" date="2009" name="Genome Res.">
        <title>Comparative genomic analyses of the human fungal pathogens Coccidioides and their relatives.</title>
        <authorList>
            <person name="Sharpton T.J."/>
            <person name="Stajich J.E."/>
            <person name="Rounsley S.D."/>
            <person name="Gardner M.J."/>
            <person name="Wortman J.R."/>
            <person name="Jordar V.S."/>
            <person name="Maiti R."/>
            <person name="Kodira C.D."/>
            <person name="Neafsey D.E."/>
            <person name="Zeng Q."/>
            <person name="Hung C.-Y."/>
            <person name="McMahan C."/>
            <person name="Muszewska A."/>
            <person name="Grynberg M."/>
            <person name="Mandel M.A."/>
            <person name="Kellner E.M."/>
            <person name="Barker B.M."/>
            <person name="Galgiani J.N."/>
            <person name="Orbach M.J."/>
            <person name="Kirkland T.N."/>
            <person name="Cole G.T."/>
            <person name="Henn M.R."/>
            <person name="Birren B.W."/>
            <person name="Taylor J.W."/>
        </authorList>
    </citation>
    <scope>NUCLEOTIDE SEQUENCE [LARGE SCALE GENOMIC DNA]</scope>
    <source>
        <strain>UAMH 1704</strain>
    </source>
</reference>
<accession>C4JKS2</accession>
<sequence length="242" mass="27193">MTDQREEPQGSNDHLVRSSDPEHPANLIPELCKKFYTLGWVTGTGGGTSIRRDGHIFIAPSGVQKEMIKPEDIFVLSYPTPKYPPSARQYIRKPQELKPSACTPLFLAAFDRGAGCSIHTHSQWAVLVTLLVEREKGKNGCFEINNIEQIKGIPKGKGKGMLGFFDTLRIPIIENTAFEEDLTESLEKAMDEYPDTYAVLVRRHGIYVWGDTVAKAKTQCESLDYLFQLAVEMHKLGLPWVQ</sequence>
<organism>
    <name type="scientific">Uncinocarpus reesii (strain UAMH 1704)</name>
    <dbReference type="NCBI Taxonomy" id="336963"/>
    <lineage>
        <taxon>Eukaryota</taxon>
        <taxon>Fungi</taxon>
        <taxon>Dikarya</taxon>
        <taxon>Ascomycota</taxon>
        <taxon>Pezizomycotina</taxon>
        <taxon>Eurotiomycetes</taxon>
        <taxon>Eurotiomycetidae</taxon>
        <taxon>Onygenales</taxon>
        <taxon>Onygenaceae</taxon>
        <taxon>Uncinocarpus</taxon>
    </lineage>
</organism>
<evidence type="ECO:0000255" key="1">
    <source>
        <dbReference type="HAMAP-Rule" id="MF_03116"/>
    </source>
</evidence>
<evidence type="ECO:0000256" key="2">
    <source>
        <dbReference type="SAM" id="MobiDB-lite"/>
    </source>
</evidence>